<name>OPAP_DROME</name>
<dbReference type="EMBL" id="X56491">
    <property type="protein sequence ID" value="CAA39846.1"/>
    <property type="status" value="ALT_FRAME"/>
    <property type="molecule type" value="mRNA"/>
</dbReference>
<dbReference type="EMBL" id="AE014296">
    <property type="protein sequence ID" value="AAF51808.1"/>
    <property type="molecule type" value="Genomic_DNA"/>
</dbReference>
<dbReference type="RefSeq" id="NP_001262203.1">
    <property type="nucleotide sequence ID" value="NM_001275274.1"/>
</dbReference>
<dbReference type="RefSeq" id="NP_524859.2">
    <property type="nucleotide sequence ID" value="NM_080120.3"/>
</dbReference>
<dbReference type="FunCoup" id="P23488">
    <property type="interactions" value="63"/>
</dbReference>
<dbReference type="STRING" id="7227.FBpp0306233"/>
<dbReference type="PaxDb" id="7227-FBpp0306233"/>
<dbReference type="DNASU" id="45962"/>
<dbReference type="EnsemblMetazoa" id="FBtr0078482">
    <property type="protein sequence ID" value="FBpp0078135"/>
    <property type="gene ID" value="FBgn0004414"/>
</dbReference>
<dbReference type="EnsemblMetazoa" id="FBtr0334114">
    <property type="protein sequence ID" value="FBpp0306233"/>
    <property type="gene ID" value="FBgn0004414"/>
</dbReference>
<dbReference type="GeneID" id="45962"/>
<dbReference type="KEGG" id="dme:Dmel_CG14560"/>
<dbReference type="AGR" id="FB:FBgn0004414"/>
<dbReference type="CTD" id="45962"/>
<dbReference type="FlyBase" id="FBgn0004414">
    <property type="gene designation" value="msopa"/>
</dbReference>
<dbReference type="VEuPathDB" id="VectorBase:FBgn0004414"/>
<dbReference type="HOGENOM" id="CLU_205495_0_0_1"/>
<dbReference type="InParanoid" id="P23488"/>
<dbReference type="BioGRID-ORCS" id="45962">
    <property type="hits" value="0 hits in 1 CRISPR screen"/>
</dbReference>
<dbReference type="GenomeRNAi" id="45962"/>
<dbReference type="PRO" id="PR:P23488"/>
<dbReference type="Proteomes" id="UP000000803">
    <property type="component" value="Chromosome 3L"/>
</dbReference>
<dbReference type="Bgee" id="FBgn0004414">
    <property type="expression patterns" value="Expressed in male accessory gland main cell (Drosophila) in male reproductive gland and 54 other cell types or tissues"/>
</dbReference>
<dbReference type="ExpressionAtlas" id="P23488">
    <property type="expression patterns" value="baseline and differential"/>
</dbReference>
<dbReference type="GO" id="GO:0005615">
    <property type="term" value="C:extracellular space"/>
    <property type="evidence" value="ECO:0007005"/>
    <property type="project" value="FlyBase"/>
</dbReference>
<dbReference type="GO" id="GO:0006952">
    <property type="term" value="P:defense response"/>
    <property type="evidence" value="ECO:0000250"/>
    <property type="project" value="FlyBase"/>
</dbReference>
<dbReference type="GO" id="GO:0019953">
    <property type="term" value="P:sexual reproduction"/>
    <property type="evidence" value="ECO:0007007"/>
    <property type="project" value="FlyBase"/>
</dbReference>
<accession>P23488</accession>
<accession>Q9VNV8</accession>
<proteinExistence type="evidence at transcript level"/>
<gene>
    <name type="primary">msopa</name>
    <name type="ORF">CG14560</name>
</gene>
<sequence length="83" mass="7938">MNFIQIAVLFVLVAVALARPQEDPANLPAPEAAAAPPAAAAAPPAAAAAPPAPPAPPAAAPQAAPAGGSGRKKNVNHNVITIG</sequence>
<organism>
    <name type="scientific">Drosophila melanogaster</name>
    <name type="common">Fruit fly</name>
    <dbReference type="NCBI Taxonomy" id="7227"/>
    <lineage>
        <taxon>Eukaryota</taxon>
        <taxon>Metazoa</taxon>
        <taxon>Ecdysozoa</taxon>
        <taxon>Arthropoda</taxon>
        <taxon>Hexapoda</taxon>
        <taxon>Insecta</taxon>
        <taxon>Pterygota</taxon>
        <taxon>Neoptera</taxon>
        <taxon>Endopterygota</taxon>
        <taxon>Diptera</taxon>
        <taxon>Brachycera</taxon>
        <taxon>Muscomorpha</taxon>
        <taxon>Ephydroidea</taxon>
        <taxon>Drosophilidae</taxon>
        <taxon>Drosophila</taxon>
        <taxon>Sophophora</taxon>
    </lineage>
</organism>
<protein>
    <recommendedName>
        <fullName>Male-specific opa-containing protein</fullName>
    </recommendedName>
    <alternativeName>
        <fullName>Protein dromsopa</fullName>
    </alternativeName>
</protein>
<keyword id="KW-1185">Reference proteome</keyword>
<keyword id="KW-0732">Signal</keyword>
<feature type="signal peptide" evidence="1">
    <location>
        <begin position="1"/>
        <end position="18"/>
    </location>
</feature>
<feature type="chain" id="PRO_0000021916" description="Male-specific opa-containing protein">
    <location>
        <begin position="19"/>
        <end position="83"/>
    </location>
</feature>
<feature type="region of interest" description="Disordered" evidence="2">
    <location>
        <begin position="23"/>
        <end position="83"/>
    </location>
</feature>
<feature type="compositionally biased region" description="Low complexity" evidence="2">
    <location>
        <begin position="28"/>
        <end position="49"/>
    </location>
</feature>
<feature type="compositionally biased region" description="Pro residues" evidence="2">
    <location>
        <begin position="50"/>
        <end position="59"/>
    </location>
</feature>
<feature type="sequence conflict" description="In Ref. 1." evidence="5" ref="1">
    <original>P</original>
    <variation>A</variation>
    <location>
        <position position="44"/>
    </location>
</feature>
<comment type="function">
    <text>May be a male specific regulatory factor.</text>
</comment>
<comment type="tissue specificity">
    <text evidence="3 4">Adult male abdomen.</text>
</comment>
<comment type="sequence caution" evidence="5">
    <conflict type="frameshift">
        <sequence resource="EMBL-CDS" id="CAA39846"/>
    </conflict>
</comment>
<evidence type="ECO:0000255" key="1"/>
<evidence type="ECO:0000256" key="2">
    <source>
        <dbReference type="SAM" id="MobiDB-lite"/>
    </source>
</evidence>
<evidence type="ECO:0000269" key="3">
    <source>
    </source>
</evidence>
<evidence type="ECO:0000269" key="4">
    <source>
    </source>
</evidence>
<evidence type="ECO:0000305" key="5"/>
<reference key="1">
    <citation type="journal article" date="1991" name="Biochim. Biophys. Acta">
        <title>An adult male specific gene in Drosophila containing the repetitive element opa.</title>
        <authorList>
            <person name="Grabowski D.T."/>
            <person name="Carney J.P."/>
            <person name="Kelley M.R."/>
        </authorList>
    </citation>
    <scope>NUCLEOTIDE SEQUENCE [MRNA]</scope>
    <scope>TISSUE SPECIFICITY</scope>
    <source>
        <tissue>Abdomen</tissue>
    </source>
</reference>
<reference key="2">
    <citation type="journal article" date="1991" name="Nucleic Acids Res.">
        <title>A Drosophila gene containing the opa repetitive element is exclusively expressed in adult male abdomens.</title>
        <authorList>
            <person name="Grabowski D.T."/>
            <person name="Carney J.P."/>
            <person name="Kelley M.R."/>
        </authorList>
    </citation>
    <scope>NUCLEOTIDE SEQUENCE [MRNA]</scope>
    <scope>TISSUE SPECIFICITY</scope>
    <source>
        <tissue>Abdomen</tissue>
    </source>
</reference>
<reference key="3">
    <citation type="journal article" date="2000" name="Science">
        <title>The genome sequence of Drosophila melanogaster.</title>
        <authorList>
            <person name="Adams M.D."/>
            <person name="Celniker S.E."/>
            <person name="Holt R.A."/>
            <person name="Evans C.A."/>
            <person name="Gocayne J.D."/>
            <person name="Amanatides P.G."/>
            <person name="Scherer S.E."/>
            <person name="Li P.W."/>
            <person name="Hoskins R.A."/>
            <person name="Galle R.F."/>
            <person name="George R.A."/>
            <person name="Lewis S.E."/>
            <person name="Richards S."/>
            <person name="Ashburner M."/>
            <person name="Henderson S.N."/>
            <person name="Sutton G.G."/>
            <person name="Wortman J.R."/>
            <person name="Yandell M.D."/>
            <person name="Zhang Q."/>
            <person name="Chen L.X."/>
            <person name="Brandon R.C."/>
            <person name="Rogers Y.-H.C."/>
            <person name="Blazej R.G."/>
            <person name="Champe M."/>
            <person name="Pfeiffer B.D."/>
            <person name="Wan K.H."/>
            <person name="Doyle C."/>
            <person name="Baxter E.G."/>
            <person name="Helt G."/>
            <person name="Nelson C.R."/>
            <person name="Miklos G.L.G."/>
            <person name="Abril J.F."/>
            <person name="Agbayani A."/>
            <person name="An H.-J."/>
            <person name="Andrews-Pfannkoch C."/>
            <person name="Baldwin D."/>
            <person name="Ballew R.M."/>
            <person name="Basu A."/>
            <person name="Baxendale J."/>
            <person name="Bayraktaroglu L."/>
            <person name="Beasley E.M."/>
            <person name="Beeson K.Y."/>
            <person name="Benos P.V."/>
            <person name="Berman B.P."/>
            <person name="Bhandari D."/>
            <person name="Bolshakov S."/>
            <person name="Borkova D."/>
            <person name="Botchan M.R."/>
            <person name="Bouck J."/>
            <person name="Brokstein P."/>
            <person name="Brottier P."/>
            <person name="Burtis K.C."/>
            <person name="Busam D.A."/>
            <person name="Butler H."/>
            <person name="Cadieu E."/>
            <person name="Center A."/>
            <person name="Chandra I."/>
            <person name="Cherry J.M."/>
            <person name="Cawley S."/>
            <person name="Dahlke C."/>
            <person name="Davenport L.B."/>
            <person name="Davies P."/>
            <person name="de Pablos B."/>
            <person name="Delcher A."/>
            <person name="Deng Z."/>
            <person name="Mays A.D."/>
            <person name="Dew I."/>
            <person name="Dietz S.M."/>
            <person name="Dodson K."/>
            <person name="Doup L.E."/>
            <person name="Downes M."/>
            <person name="Dugan-Rocha S."/>
            <person name="Dunkov B.C."/>
            <person name="Dunn P."/>
            <person name="Durbin K.J."/>
            <person name="Evangelista C.C."/>
            <person name="Ferraz C."/>
            <person name="Ferriera S."/>
            <person name="Fleischmann W."/>
            <person name="Fosler C."/>
            <person name="Gabrielian A.E."/>
            <person name="Garg N.S."/>
            <person name="Gelbart W.M."/>
            <person name="Glasser K."/>
            <person name="Glodek A."/>
            <person name="Gong F."/>
            <person name="Gorrell J.H."/>
            <person name="Gu Z."/>
            <person name="Guan P."/>
            <person name="Harris M."/>
            <person name="Harris N.L."/>
            <person name="Harvey D.A."/>
            <person name="Heiman T.J."/>
            <person name="Hernandez J.R."/>
            <person name="Houck J."/>
            <person name="Hostin D."/>
            <person name="Houston K.A."/>
            <person name="Howland T.J."/>
            <person name="Wei M.-H."/>
            <person name="Ibegwam C."/>
            <person name="Jalali M."/>
            <person name="Kalush F."/>
            <person name="Karpen G.H."/>
            <person name="Ke Z."/>
            <person name="Kennison J.A."/>
            <person name="Ketchum K.A."/>
            <person name="Kimmel B.E."/>
            <person name="Kodira C.D."/>
            <person name="Kraft C.L."/>
            <person name="Kravitz S."/>
            <person name="Kulp D."/>
            <person name="Lai Z."/>
            <person name="Lasko P."/>
            <person name="Lei Y."/>
            <person name="Levitsky A.A."/>
            <person name="Li J.H."/>
            <person name="Li Z."/>
            <person name="Liang Y."/>
            <person name="Lin X."/>
            <person name="Liu X."/>
            <person name="Mattei B."/>
            <person name="McIntosh T.C."/>
            <person name="McLeod M.P."/>
            <person name="McPherson D."/>
            <person name="Merkulov G."/>
            <person name="Milshina N.V."/>
            <person name="Mobarry C."/>
            <person name="Morris J."/>
            <person name="Moshrefi A."/>
            <person name="Mount S.M."/>
            <person name="Moy M."/>
            <person name="Murphy B."/>
            <person name="Murphy L."/>
            <person name="Muzny D.M."/>
            <person name="Nelson D.L."/>
            <person name="Nelson D.R."/>
            <person name="Nelson K.A."/>
            <person name="Nixon K."/>
            <person name="Nusskern D.R."/>
            <person name="Pacleb J.M."/>
            <person name="Palazzolo M."/>
            <person name="Pittman G.S."/>
            <person name="Pan S."/>
            <person name="Pollard J."/>
            <person name="Puri V."/>
            <person name="Reese M.G."/>
            <person name="Reinert K."/>
            <person name="Remington K."/>
            <person name="Saunders R.D.C."/>
            <person name="Scheeler F."/>
            <person name="Shen H."/>
            <person name="Shue B.C."/>
            <person name="Siden-Kiamos I."/>
            <person name="Simpson M."/>
            <person name="Skupski M.P."/>
            <person name="Smith T.J."/>
            <person name="Spier E."/>
            <person name="Spradling A.C."/>
            <person name="Stapleton M."/>
            <person name="Strong R."/>
            <person name="Sun E."/>
            <person name="Svirskas R."/>
            <person name="Tector C."/>
            <person name="Turner R."/>
            <person name="Venter E."/>
            <person name="Wang A.H."/>
            <person name="Wang X."/>
            <person name="Wang Z.-Y."/>
            <person name="Wassarman D.A."/>
            <person name="Weinstock G.M."/>
            <person name="Weissenbach J."/>
            <person name="Williams S.M."/>
            <person name="Woodage T."/>
            <person name="Worley K.C."/>
            <person name="Wu D."/>
            <person name="Yang S."/>
            <person name="Yao Q.A."/>
            <person name="Ye J."/>
            <person name="Yeh R.-F."/>
            <person name="Zaveri J.S."/>
            <person name="Zhan M."/>
            <person name="Zhang G."/>
            <person name="Zhao Q."/>
            <person name="Zheng L."/>
            <person name="Zheng X.H."/>
            <person name="Zhong F.N."/>
            <person name="Zhong W."/>
            <person name="Zhou X."/>
            <person name="Zhu S.C."/>
            <person name="Zhu X."/>
            <person name="Smith H.O."/>
            <person name="Gibbs R.A."/>
            <person name="Myers E.W."/>
            <person name="Rubin G.M."/>
            <person name="Venter J.C."/>
        </authorList>
    </citation>
    <scope>NUCLEOTIDE SEQUENCE [LARGE SCALE GENOMIC DNA]</scope>
    <source>
        <strain>Berkeley</strain>
    </source>
</reference>
<reference key="4">
    <citation type="journal article" date="2002" name="Genome Biol.">
        <title>Annotation of the Drosophila melanogaster euchromatic genome: a systematic review.</title>
        <authorList>
            <person name="Misra S."/>
            <person name="Crosby M.A."/>
            <person name="Mungall C.J."/>
            <person name="Matthews B.B."/>
            <person name="Campbell K.S."/>
            <person name="Hradecky P."/>
            <person name="Huang Y."/>
            <person name="Kaminker J.S."/>
            <person name="Millburn G.H."/>
            <person name="Prochnik S.E."/>
            <person name="Smith C.D."/>
            <person name="Tupy J.L."/>
            <person name="Whitfield E.J."/>
            <person name="Bayraktaroglu L."/>
            <person name="Berman B.P."/>
            <person name="Bettencourt B.R."/>
            <person name="Celniker S.E."/>
            <person name="de Grey A.D.N.J."/>
            <person name="Drysdale R.A."/>
            <person name="Harris N.L."/>
            <person name="Richter J."/>
            <person name="Russo S."/>
            <person name="Schroeder A.J."/>
            <person name="Shu S.Q."/>
            <person name="Stapleton M."/>
            <person name="Yamada C."/>
            <person name="Ashburner M."/>
            <person name="Gelbart W.M."/>
            <person name="Rubin G.M."/>
            <person name="Lewis S.E."/>
        </authorList>
    </citation>
    <scope>GENOME REANNOTATION</scope>
    <source>
        <strain>Berkeley</strain>
    </source>
</reference>